<reference key="1">
    <citation type="submission" date="2007-07" db="EMBL/GenBank/DDBJ databases">
        <title>Complete sequence of chromosome of Shewanella baltica OS185.</title>
        <authorList>
            <consortium name="US DOE Joint Genome Institute"/>
            <person name="Copeland A."/>
            <person name="Lucas S."/>
            <person name="Lapidus A."/>
            <person name="Barry K."/>
            <person name="Glavina del Rio T."/>
            <person name="Dalin E."/>
            <person name="Tice H."/>
            <person name="Pitluck S."/>
            <person name="Sims D."/>
            <person name="Brettin T."/>
            <person name="Bruce D."/>
            <person name="Detter J.C."/>
            <person name="Han C."/>
            <person name="Schmutz J."/>
            <person name="Larimer F."/>
            <person name="Land M."/>
            <person name="Hauser L."/>
            <person name="Kyrpides N."/>
            <person name="Mikhailova N."/>
            <person name="Brettar I."/>
            <person name="Rodrigues J."/>
            <person name="Konstantinidis K."/>
            <person name="Tiedje J."/>
            <person name="Richardson P."/>
        </authorList>
    </citation>
    <scope>NUCLEOTIDE SEQUENCE [LARGE SCALE GENOMIC DNA]</scope>
    <source>
        <strain>OS185</strain>
    </source>
</reference>
<name>RLME_SHEB8</name>
<sequence length="209" mass="23096">MSGIKRTASSNRWMLEHFDDHYVKLAQKMGLRSRAAFKLEEIQQKDQLIRPGMTVVDLGAAPGGWSQVAVKLAGDRGKVIACDILPMDPIVGVDFLQGDFREDKVLQALLTRVGDAKVDVVLSDMAPNMSGSDSVDQPRAMYLVELALDMCHQVLAPNGCFAVKVFQGEGFDEYMKAVKAVFKVVKTRKPDSSRARSREVYLVATGYKL</sequence>
<comment type="function">
    <text evidence="1">Specifically methylates the uridine in position 2552 of 23S rRNA at the 2'-O position of the ribose in the fully assembled 50S ribosomal subunit.</text>
</comment>
<comment type="catalytic activity">
    <reaction evidence="1">
        <text>uridine(2552) in 23S rRNA + S-adenosyl-L-methionine = 2'-O-methyluridine(2552) in 23S rRNA + S-adenosyl-L-homocysteine + H(+)</text>
        <dbReference type="Rhea" id="RHEA:42720"/>
        <dbReference type="Rhea" id="RHEA-COMP:10202"/>
        <dbReference type="Rhea" id="RHEA-COMP:10203"/>
        <dbReference type="ChEBI" id="CHEBI:15378"/>
        <dbReference type="ChEBI" id="CHEBI:57856"/>
        <dbReference type="ChEBI" id="CHEBI:59789"/>
        <dbReference type="ChEBI" id="CHEBI:65315"/>
        <dbReference type="ChEBI" id="CHEBI:74478"/>
        <dbReference type="EC" id="2.1.1.166"/>
    </reaction>
</comment>
<comment type="subcellular location">
    <subcellularLocation>
        <location evidence="1">Cytoplasm</location>
    </subcellularLocation>
</comment>
<comment type="similarity">
    <text evidence="1">Belongs to the class I-like SAM-binding methyltransferase superfamily. RNA methyltransferase RlmE family.</text>
</comment>
<accession>A6WRH7</accession>
<proteinExistence type="inferred from homology"/>
<feature type="chain" id="PRO_1000087713" description="Ribosomal RNA large subunit methyltransferase E">
    <location>
        <begin position="1"/>
        <end position="209"/>
    </location>
</feature>
<feature type="active site" description="Proton acceptor" evidence="1">
    <location>
        <position position="164"/>
    </location>
</feature>
<feature type="binding site" evidence="1">
    <location>
        <position position="63"/>
    </location>
    <ligand>
        <name>S-adenosyl-L-methionine</name>
        <dbReference type="ChEBI" id="CHEBI:59789"/>
    </ligand>
</feature>
<feature type="binding site" evidence="1">
    <location>
        <position position="65"/>
    </location>
    <ligand>
        <name>S-adenosyl-L-methionine</name>
        <dbReference type="ChEBI" id="CHEBI:59789"/>
    </ligand>
</feature>
<feature type="binding site" evidence="1">
    <location>
        <position position="83"/>
    </location>
    <ligand>
        <name>S-adenosyl-L-methionine</name>
        <dbReference type="ChEBI" id="CHEBI:59789"/>
    </ligand>
</feature>
<feature type="binding site" evidence="1">
    <location>
        <position position="99"/>
    </location>
    <ligand>
        <name>S-adenosyl-L-methionine</name>
        <dbReference type="ChEBI" id="CHEBI:59789"/>
    </ligand>
</feature>
<feature type="binding site" evidence="1">
    <location>
        <position position="124"/>
    </location>
    <ligand>
        <name>S-adenosyl-L-methionine</name>
        <dbReference type="ChEBI" id="CHEBI:59789"/>
    </ligand>
</feature>
<gene>
    <name evidence="1" type="primary">rlmE</name>
    <name evidence="1" type="synonym">ftsJ</name>
    <name evidence="1" type="synonym">rrmJ</name>
    <name type="ordered locus">Shew185_3289</name>
</gene>
<organism>
    <name type="scientific">Shewanella baltica (strain OS185)</name>
    <dbReference type="NCBI Taxonomy" id="402882"/>
    <lineage>
        <taxon>Bacteria</taxon>
        <taxon>Pseudomonadati</taxon>
        <taxon>Pseudomonadota</taxon>
        <taxon>Gammaproteobacteria</taxon>
        <taxon>Alteromonadales</taxon>
        <taxon>Shewanellaceae</taxon>
        <taxon>Shewanella</taxon>
    </lineage>
</organism>
<evidence type="ECO:0000255" key="1">
    <source>
        <dbReference type="HAMAP-Rule" id="MF_01547"/>
    </source>
</evidence>
<protein>
    <recommendedName>
        <fullName evidence="1">Ribosomal RNA large subunit methyltransferase E</fullName>
        <ecNumber evidence="1">2.1.1.166</ecNumber>
    </recommendedName>
    <alternativeName>
        <fullName evidence="1">23S rRNA Um2552 methyltransferase</fullName>
    </alternativeName>
    <alternativeName>
        <fullName evidence="1">rRNA (uridine-2'-O-)-methyltransferase</fullName>
    </alternativeName>
</protein>
<dbReference type="EC" id="2.1.1.166" evidence="1"/>
<dbReference type="EMBL" id="CP000753">
    <property type="protein sequence ID" value="ABS09416.1"/>
    <property type="molecule type" value="Genomic_DNA"/>
</dbReference>
<dbReference type="RefSeq" id="WP_006082724.1">
    <property type="nucleotide sequence ID" value="NC_009665.1"/>
</dbReference>
<dbReference type="SMR" id="A6WRH7"/>
<dbReference type="GeneID" id="11773467"/>
<dbReference type="KEGG" id="sbm:Shew185_3289"/>
<dbReference type="HOGENOM" id="CLU_009422_4_0_6"/>
<dbReference type="GO" id="GO:0005737">
    <property type="term" value="C:cytoplasm"/>
    <property type="evidence" value="ECO:0007669"/>
    <property type="project" value="UniProtKB-SubCell"/>
</dbReference>
<dbReference type="GO" id="GO:0008650">
    <property type="term" value="F:rRNA (uridine-2'-O-)-methyltransferase activity"/>
    <property type="evidence" value="ECO:0007669"/>
    <property type="project" value="UniProtKB-UniRule"/>
</dbReference>
<dbReference type="FunFam" id="3.40.50.150:FF:000005">
    <property type="entry name" value="Ribosomal RNA large subunit methyltransferase E"/>
    <property type="match status" value="1"/>
</dbReference>
<dbReference type="Gene3D" id="3.40.50.150">
    <property type="entry name" value="Vaccinia Virus protein VP39"/>
    <property type="match status" value="1"/>
</dbReference>
<dbReference type="HAMAP" id="MF_01547">
    <property type="entry name" value="RNA_methyltr_E"/>
    <property type="match status" value="1"/>
</dbReference>
<dbReference type="InterPro" id="IPR050082">
    <property type="entry name" value="RNA_methyltr_RlmE"/>
</dbReference>
<dbReference type="InterPro" id="IPR002877">
    <property type="entry name" value="RNA_MeTrfase_FtsJ_dom"/>
</dbReference>
<dbReference type="InterPro" id="IPR015507">
    <property type="entry name" value="rRNA-MeTfrase_E"/>
</dbReference>
<dbReference type="InterPro" id="IPR029063">
    <property type="entry name" value="SAM-dependent_MTases_sf"/>
</dbReference>
<dbReference type="NCBIfam" id="NF008390">
    <property type="entry name" value="PRK11188.1"/>
    <property type="match status" value="1"/>
</dbReference>
<dbReference type="PANTHER" id="PTHR10920">
    <property type="entry name" value="RIBOSOMAL RNA METHYLTRANSFERASE"/>
    <property type="match status" value="1"/>
</dbReference>
<dbReference type="PANTHER" id="PTHR10920:SF18">
    <property type="entry name" value="RRNA METHYLTRANSFERASE 2, MITOCHONDRIAL"/>
    <property type="match status" value="1"/>
</dbReference>
<dbReference type="Pfam" id="PF01728">
    <property type="entry name" value="FtsJ"/>
    <property type="match status" value="1"/>
</dbReference>
<dbReference type="PIRSF" id="PIRSF005461">
    <property type="entry name" value="23S_rRNA_mtase"/>
    <property type="match status" value="1"/>
</dbReference>
<dbReference type="SUPFAM" id="SSF53335">
    <property type="entry name" value="S-adenosyl-L-methionine-dependent methyltransferases"/>
    <property type="match status" value="1"/>
</dbReference>
<keyword id="KW-0963">Cytoplasm</keyword>
<keyword id="KW-0489">Methyltransferase</keyword>
<keyword id="KW-0698">rRNA processing</keyword>
<keyword id="KW-0949">S-adenosyl-L-methionine</keyword>
<keyword id="KW-0808">Transferase</keyword>